<sequence>MAEAWRYSAQGVAVAVRVTPRGGRDDIDGLETLSDGRPVVKVRVRAIADGGEANRAVTELLAKAVGVPKRNVRLLSGATSRQKQIAIDGDPKQLGEALRRLVAAKPAE</sequence>
<proteinExistence type="inferred from homology"/>
<accession>B3QA92</accession>
<protein>
    <recommendedName>
        <fullName evidence="1">UPF0235 protein Rpal_0418</fullName>
    </recommendedName>
</protein>
<comment type="similarity">
    <text evidence="1">Belongs to the UPF0235 family.</text>
</comment>
<organism>
    <name type="scientific">Rhodopseudomonas palustris (strain TIE-1)</name>
    <dbReference type="NCBI Taxonomy" id="395960"/>
    <lineage>
        <taxon>Bacteria</taxon>
        <taxon>Pseudomonadati</taxon>
        <taxon>Pseudomonadota</taxon>
        <taxon>Alphaproteobacteria</taxon>
        <taxon>Hyphomicrobiales</taxon>
        <taxon>Nitrobacteraceae</taxon>
        <taxon>Rhodopseudomonas</taxon>
    </lineage>
</organism>
<name>Y418_RHOPT</name>
<feature type="chain" id="PRO_1000130704" description="UPF0235 protein Rpal_0418">
    <location>
        <begin position="1"/>
        <end position="108"/>
    </location>
</feature>
<gene>
    <name type="ordered locus">Rpal_0418</name>
</gene>
<evidence type="ECO:0000255" key="1">
    <source>
        <dbReference type="HAMAP-Rule" id="MF_00634"/>
    </source>
</evidence>
<reference key="1">
    <citation type="submission" date="2008-05" db="EMBL/GenBank/DDBJ databases">
        <title>Complete sequence of Rhodopseudomonas palustris TIE-1.</title>
        <authorList>
            <consortium name="US DOE Joint Genome Institute"/>
            <person name="Lucas S."/>
            <person name="Copeland A."/>
            <person name="Lapidus A."/>
            <person name="Glavina del Rio T."/>
            <person name="Dalin E."/>
            <person name="Tice H."/>
            <person name="Pitluck S."/>
            <person name="Chain P."/>
            <person name="Malfatti S."/>
            <person name="Shin M."/>
            <person name="Vergez L."/>
            <person name="Lang D."/>
            <person name="Schmutz J."/>
            <person name="Larimer F."/>
            <person name="Land M."/>
            <person name="Hauser L."/>
            <person name="Kyrpides N."/>
            <person name="Mikhailova N."/>
            <person name="Emerson D."/>
            <person name="Newman D.K."/>
            <person name="Roden E."/>
            <person name="Richardson P."/>
        </authorList>
    </citation>
    <scope>NUCLEOTIDE SEQUENCE [LARGE SCALE GENOMIC DNA]</scope>
    <source>
        <strain>TIE-1</strain>
    </source>
</reference>
<dbReference type="EMBL" id="CP001096">
    <property type="protein sequence ID" value="ACE98978.1"/>
    <property type="molecule type" value="Genomic_DNA"/>
</dbReference>
<dbReference type="RefSeq" id="WP_012494136.1">
    <property type="nucleotide sequence ID" value="NC_011004.1"/>
</dbReference>
<dbReference type="SMR" id="B3QA92"/>
<dbReference type="KEGG" id="rpt:Rpal_0418"/>
<dbReference type="HOGENOM" id="CLU_130694_3_0_5"/>
<dbReference type="OrthoDB" id="9801972at2"/>
<dbReference type="Proteomes" id="UP000001725">
    <property type="component" value="Chromosome"/>
</dbReference>
<dbReference type="Gene3D" id="3.30.1200.10">
    <property type="entry name" value="YggU-like"/>
    <property type="match status" value="1"/>
</dbReference>
<dbReference type="HAMAP" id="MF_00634">
    <property type="entry name" value="UPF0235"/>
    <property type="match status" value="1"/>
</dbReference>
<dbReference type="InterPro" id="IPR003746">
    <property type="entry name" value="DUF167"/>
</dbReference>
<dbReference type="InterPro" id="IPR036591">
    <property type="entry name" value="YggU-like_sf"/>
</dbReference>
<dbReference type="NCBIfam" id="TIGR00251">
    <property type="entry name" value="DUF167 family protein"/>
    <property type="match status" value="1"/>
</dbReference>
<dbReference type="NCBIfam" id="NF002348">
    <property type="entry name" value="PRK01310.1"/>
    <property type="match status" value="1"/>
</dbReference>
<dbReference type="Pfam" id="PF02594">
    <property type="entry name" value="DUF167"/>
    <property type="match status" value="1"/>
</dbReference>
<dbReference type="SMART" id="SM01152">
    <property type="entry name" value="DUF167"/>
    <property type="match status" value="1"/>
</dbReference>
<dbReference type="SUPFAM" id="SSF69786">
    <property type="entry name" value="YggU-like"/>
    <property type="match status" value="1"/>
</dbReference>